<proteinExistence type="inferred from homology"/>
<feature type="chain" id="PRO_0000240905" description="Cysteine--tRNA ligase">
    <location>
        <begin position="1"/>
        <end position="478"/>
    </location>
</feature>
<feature type="short sequence motif" description="'HIGH' region">
    <location>
        <begin position="31"/>
        <end position="41"/>
    </location>
</feature>
<feature type="short sequence motif" description="'KMSKS' region">
    <location>
        <begin position="263"/>
        <end position="267"/>
    </location>
</feature>
<feature type="binding site" evidence="1">
    <location>
        <position position="29"/>
    </location>
    <ligand>
        <name>Zn(2+)</name>
        <dbReference type="ChEBI" id="CHEBI:29105"/>
    </ligand>
</feature>
<feature type="binding site" evidence="1">
    <location>
        <position position="207"/>
    </location>
    <ligand>
        <name>Zn(2+)</name>
        <dbReference type="ChEBI" id="CHEBI:29105"/>
    </ligand>
</feature>
<feature type="binding site" evidence="1">
    <location>
        <position position="232"/>
    </location>
    <ligand>
        <name>Zn(2+)</name>
        <dbReference type="ChEBI" id="CHEBI:29105"/>
    </ligand>
</feature>
<feature type="binding site" evidence="1">
    <location>
        <position position="236"/>
    </location>
    <ligand>
        <name>Zn(2+)</name>
        <dbReference type="ChEBI" id="CHEBI:29105"/>
    </ligand>
</feature>
<feature type="binding site" evidence="1">
    <location>
        <position position="266"/>
    </location>
    <ligand>
        <name>ATP</name>
        <dbReference type="ChEBI" id="CHEBI:30616"/>
    </ligand>
</feature>
<name>SYC_CORJK</name>
<gene>
    <name evidence="1" type="primary">cysS</name>
    <name type="ordered locus">jk0313</name>
</gene>
<protein>
    <recommendedName>
        <fullName evidence="1">Cysteine--tRNA ligase</fullName>
        <ecNumber evidence="1">6.1.1.16</ecNumber>
    </recommendedName>
    <alternativeName>
        <fullName evidence="1">Cysteinyl-tRNA synthetase</fullName>
        <shortName evidence="1">CysRS</shortName>
    </alternativeName>
</protein>
<evidence type="ECO:0000255" key="1">
    <source>
        <dbReference type="HAMAP-Rule" id="MF_00041"/>
    </source>
</evidence>
<dbReference type="EC" id="6.1.1.16" evidence="1"/>
<dbReference type="EMBL" id="CR931997">
    <property type="protein sequence ID" value="CAI36465.1"/>
    <property type="molecule type" value="Genomic_DNA"/>
</dbReference>
<dbReference type="RefSeq" id="WP_011273025.1">
    <property type="nucleotide sequence ID" value="NC_007164.1"/>
</dbReference>
<dbReference type="SMR" id="Q4JXJ2"/>
<dbReference type="STRING" id="306537.jk0313"/>
<dbReference type="KEGG" id="cjk:jk0313"/>
<dbReference type="eggNOG" id="COG0215">
    <property type="taxonomic scope" value="Bacteria"/>
</dbReference>
<dbReference type="HOGENOM" id="CLU_013528_0_1_11"/>
<dbReference type="Proteomes" id="UP000000545">
    <property type="component" value="Chromosome"/>
</dbReference>
<dbReference type="GO" id="GO:0005829">
    <property type="term" value="C:cytosol"/>
    <property type="evidence" value="ECO:0007669"/>
    <property type="project" value="TreeGrafter"/>
</dbReference>
<dbReference type="GO" id="GO:0005524">
    <property type="term" value="F:ATP binding"/>
    <property type="evidence" value="ECO:0007669"/>
    <property type="project" value="UniProtKB-UniRule"/>
</dbReference>
<dbReference type="GO" id="GO:0004817">
    <property type="term" value="F:cysteine-tRNA ligase activity"/>
    <property type="evidence" value="ECO:0007669"/>
    <property type="project" value="UniProtKB-UniRule"/>
</dbReference>
<dbReference type="GO" id="GO:0008270">
    <property type="term" value="F:zinc ion binding"/>
    <property type="evidence" value="ECO:0007669"/>
    <property type="project" value="UniProtKB-UniRule"/>
</dbReference>
<dbReference type="GO" id="GO:0006423">
    <property type="term" value="P:cysteinyl-tRNA aminoacylation"/>
    <property type="evidence" value="ECO:0007669"/>
    <property type="project" value="UniProtKB-UniRule"/>
</dbReference>
<dbReference type="CDD" id="cd00672">
    <property type="entry name" value="CysRS_core"/>
    <property type="match status" value="1"/>
</dbReference>
<dbReference type="FunFam" id="3.40.50.620:FF:000068">
    <property type="entry name" value="Cysteine--tRNA ligase"/>
    <property type="match status" value="1"/>
</dbReference>
<dbReference type="Gene3D" id="1.20.120.1910">
    <property type="entry name" value="Cysteine-tRNA ligase, C-terminal anti-codon recognition domain"/>
    <property type="match status" value="1"/>
</dbReference>
<dbReference type="Gene3D" id="3.40.50.620">
    <property type="entry name" value="HUPs"/>
    <property type="match status" value="1"/>
</dbReference>
<dbReference type="HAMAP" id="MF_00041">
    <property type="entry name" value="Cys_tRNA_synth"/>
    <property type="match status" value="1"/>
</dbReference>
<dbReference type="InterPro" id="IPR015803">
    <property type="entry name" value="Cys-tRNA-ligase"/>
</dbReference>
<dbReference type="InterPro" id="IPR015273">
    <property type="entry name" value="Cys-tRNA-synt_Ia_DALR"/>
</dbReference>
<dbReference type="InterPro" id="IPR024909">
    <property type="entry name" value="Cys-tRNA/MSH_ligase"/>
</dbReference>
<dbReference type="InterPro" id="IPR056411">
    <property type="entry name" value="CysS_C"/>
</dbReference>
<dbReference type="InterPro" id="IPR014729">
    <property type="entry name" value="Rossmann-like_a/b/a_fold"/>
</dbReference>
<dbReference type="InterPro" id="IPR032678">
    <property type="entry name" value="tRNA-synt_1_cat_dom"/>
</dbReference>
<dbReference type="InterPro" id="IPR009080">
    <property type="entry name" value="tRNAsynth_Ia_anticodon-bd"/>
</dbReference>
<dbReference type="NCBIfam" id="TIGR00435">
    <property type="entry name" value="cysS"/>
    <property type="match status" value="1"/>
</dbReference>
<dbReference type="PANTHER" id="PTHR10890:SF30">
    <property type="entry name" value="CYSTEINE--TRNA LIGASE"/>
    <property type="match status" value="1"/>
</dbReference>
<dbReference type="PANTHER" id="PTHR10890">
    <property type="entry name" value="CYSTEINYL-TRNA SYNTHETASE"/>
    <property type="match status" value="1"/>
</dbReference>
<dbReference type="Pfam" id="PF23493">
    <property type="entry name" value="CysS_C"/>
    <property type="match status" value="1"/>
</dbReference>
<dbReference type="Pfam" id="PF09190">
    <property type="entry name" value="DALR_2"/>
    <property type="match status" value="1"/>
</dbReference>
<dbReference type="Pfam" id="PF01406">
    <property type="entry name" value="tRNA-synt_1e"/>
    <property type="match status" value="1"/>
</dbReference>
<dbReference type="PRINTS" id="PR00983">
    <property type="entry name" value="TRNASYNTHCYS"/>
</dbReference>
<dbReference type="SMART" id="SM00840">
    <property type="entry name" value="DALR_2"/>
    <property type="match status" value="1"/>
</dbReference>
<dbReference type="SUPFAM" id="SSF47323">
    <property type="entry name" value="Anticodon-binding domain of a subclass of class I aminoacyl-tRNA synthetases"/>
    <property type="match status" value="1"/>
</dbReference>
<dbReference type="SUPFAM" id="SSF52374">
    <property type="entry name" value="Nucleotidylyl transferase"/>
    <property type="match status" value="1"/>
</dbReference>
<comment type="catalytic activity">
    <reaction evidence="1">
        <text>tRNA(Cys) + L-cysteine + ATP = L-cysteinyl-tRNA(Cys) + AMP + diphosphate</text>
        <dbReference type="Rhea" id="RHEA:17773"/>
        <dbReference type="Rhea" id="RHEA-COMP:9661"/>
        <dbReference type="Rhea" id="RHEA-COMP:9679"/>
        <dbReference type="ChEBI" id="CHEBI:30616"/>
        <dbReference type="ChEBI" id="CHEBI:33019"/>
        <dbReference type="ChEBI" id="CHEBI:35235"/>
        <dbReference type="ChEBI" id="CHEBI:78442"/>
        <dbReference type="ChEBI" id="CHEBI:78517"/>
        <dbReference type="ChEBI" id="CHEBI:456215"/>
        <dbReference type="EC" id="6.1.1.16"/>
    </reaction>
</comment>
<comment type="cofactor">
    <cofactor evidence="1">
        <name>Zn(2+)</name>
        <dbReference type="ChEBI" id="CHEBI:29105"/>
    </cofactor>
    <text evidence="1">Binds 1 zinc ion per subunit.</text>
</comment>
<comment type="subunit">
    <text evidence="1">Monomer.</text>
</comment>
<comment type="subcellular location">
    <subcellularLocation>
        <location evidence="1">Cytoplasm</location>
    </subcellularLocation>
</comment>
<comment type="similarity">
    <text evidence="1">Belongs to the class-I aminoacyl-tRNA synthetase family.</text>
</comment>
<keyword id="KW-0030">Aminoacyl-tRNA synthetase</keyword>
<keyword id="KW-0067">ATP-binding</keyword>
<keyword id="KW-0963">Cytoplasm</keyword>
<keyword id="KW-0436">Ligase</keyword>
<keyword id="KW-0479">Metal-binding</keyword>
<keyword id="KW-0547">Nucleotide-binding</keyword>
<keyword id="KW-0648">Protein biosynthesis</keyword>
<keyword id="KW-1185">Reference proteome</keyword>
<keyword id="KW-0862">Zinc</keyword>
<accession>Q4JXJ2</accession>
<reference key="1">
    <citation type="journal article" date="2005" name="J. Bacteriol.">
        <title>Complete genome sequence and analysis of the multiresistant nosocomial pathogen Corynebacterium jeikeium K411, a lipid-requiring bacterium of the human skin flora.</title>
        <authorList>
            <person name="Tauch A."/>
            <person name="Kaiser O."/>
            <person name="Hain T."/>
            <person name="Goesmann A."/>
            <person name="Weisshaar B."/>
            <person name="Albersmeier A."/>
            <person name="Bekel T."/>
            <person name="Bischoff N."/>
            <person name="Brune I."/>
            <person name="Chakraborty T."/>
            <person name="Kalinowski J."/>
            <person name="Meyer F."/>
            <person name="Rupp O."/>
            <person name="Schneiker S."/>
            <person name="Viehoever P."/>
            <person name="Puehler A."/>
        </authorList>
    </citation>
    <scope>NUCLEOTIDE SEQUENCE [LARGE SCALE GENOMIC DNA]</scope>
    <source>
        <strain>K411</strain>
    </source>
</reference>
<organism>
    <name type="scientific">Corynebacterium jeikeium (strain K411)</name>
    <dbReference type="NCBI Taxonomy" id="306537"/>
    <lineage>
        <taxon>Bacteria</taxon>
        <taxon>Bacillati</taxon>
        <taxon>Actinomycetota</taxon>
        <taxon>Actinomycetes</taxon>
        <taxon>Mycobacteriales</taxon>
        <taxon>Corynebacteriaceae</taxon>
        <taxon>Corynebacterium</taxon>
    </lineage>
</organism>
<sequence length="478" mass="52581">MTLRIYDTAARQLRDFEPIREGHASIYLCGATVQSIPHIGHVRSGVAFDILRNWLEAKGLDVAFVRNVTDIDDKILTKAAENDRPWWEWAATHERAFNWAYDQLGVTPPSIEPRATGHVPQMIEYMQRIIDNGHGYAADGNVYAQPATIDNYGFLSGQKLDEMDQGESAGTGKRDPRDFTMWKAAKPGEPAWDTPWGRGRPGWHIECSAMATTYLGSEFDIHCGGLDLQFPHHENEAAQATAAGDGFARYWMHNGWVTMSGEKMSKSLGNVLSIPNVLKLVRPVELRYYLGSAHYRSMLEYSEAALGEAAAGYRRIEKFLVRAIEYVTGETAVDPQALPVGEMPAQFAEKMDDDLAVPQSLAVIHDVVREGNKLLDAKPTDEAKQQVKEIAGQVRAMAAVLGVDPLSEAWLESTKAAAGGSDVAMGALDVLVKAELERRAEARAAKDWATADEVRDRLAEAGIEVTDTADGAKWSLKG</sequence>